<protein>
    <recommendedName>
        <fullName evidence="1">5-methyltetrahydropteroyltriglutamate--homocysteine methyltransferase</fullName>
        <ecNumber evidence="1">2.1.1.14</ecNumber>
    </recommendedName>
    <alternativeName>
        <fullName evidence="1">Cobalamin-independent methionine synthase</fullName>
    </alternativeName>
    <alternativeName>
        <fullName evidence="1">Methionine synthase, vitamin-B12 independent isozyme</fullName>
    </alternativeName>
</protein>
<accession>B5E298</accession>
<sequence length="749" mass="84666">MSTTIIGFPRLGEFRELKFTTEKYFRKEISEEELLAAAKDLRAKHWNIVKEKGITEIPSNDFSHYDNFLDAAFLFNVVPASVQNLDLSDLERYFALGRGYQGEKGDVRALPMKKWFNTNYHYIVPKFEKDTQVKLAGHKIFDEFQEAKELGLNTRPVLVGPFTFLQLSDFEEGVKADDFVDSLVAAYQEVFAKLAELGATRIQLDEAALVKDLTAEEKALFLNLYNKLLADKKGLEVLLQTYFGDVRDVYADLVNLPVDAIGLDFVEGKKTLELVKGGFPADKTLYVGIVNGKNIWRNNYEKSLAVLEQIPAENIVLTSSCSLLHVPFTTANEEFEPALLNHFAFAVEKLDEIRDLDAIRNGQGSEALAANKELFATERVGENAELRARIAGLTDVDYTRLPAFAEREAIQEEAFKLPALPTTTIGSFPQTKEVRAKRLAYRKGELSQKEYDAFLAETIDEWIKWQEDIDFDVLVHGEFERNDMVEYFGQNLSGYLFSKNGWVQSYGMRGVKPPIIWGDVTRLNPITVKWSSYAQSRTNKPVKGMLTGPVTILNWSFPREDISIKDSTLQIALAIKDEVLDLEAAGVKIIQIDEAALREKLPLRRSDWYEDYLDWAIPAFRLVHSTVASDTQIHTHMCYSEFTDIIPAIDNMDADVISFEASRSNLEILDELKAKNFQTEVGPGVYDIHSPRVPNEGEIDNTIEAILAKVPSKKVWINPDCGLKTRGIPETKESLIRLVEAAKAAREKL</sequence>
<name>METE_STRP4</name>
<reference key="1">
    <citation type="journal article" date="2001" name="Microb. Drug Resist.">
        <title>Annotated draft genomic sequence from a Streptococcus pneumoniae type 19F clinical isolate.</title>
        <authorList>
            <person name="Dopazo J."/>
            <person name="Mendoza A."/>
            <person name="Herrero J."/>
            <person name="Caldara F."/>
            <person name="Humbert Y."/>
            <person name="Friedli L."/>
            <person name="Guerrier M."/>
            <person name="Grand-Schenk E."/>
            <person name="Gandin C."/>
            <person name="de Francesco M."/>
            <person name="Polissi A."/>
            <person name="Buell G."/>
            <person name="Feger G."/>
            <person name="Garcia E."/>
            <person name="Peitsch M."/>
            <person name="Garcia-Bustos J.F."/>
        </authorList>
    </citation>
    <scope>NUCLEOTIDE SEQUENCE [LARGE SCALE GENOMIC DNA]</scope>
    <source>
        <strain>G54</strain>
    </source>
</reference>
<reference key="2">
    <citation type="submission" date="2008-03" db="EMBL/GenBank/DDBJ databases">
        <title>Pneumococcal beta glucoside metabolism investigated by whole genome comparison.</title>
        <authorList>
            <person name="Mulas L."/>
            <person name="Trappetti C."/>
            <person name="Hakenbeck R."/>
            <person name="Iannelli F."/>
            <person name="Pozzi G."/>
            <person name="Davidsen T.M."/>
            <person name="Tettelin H."/>
            <person name="Oggioni M."/>
        </authorList>
    </citation>
    <scope>NUCLEOTIDE SEQUENCE [LARGE SCALE GENOMIC DNA]</scope>
    <source>
        <strain>G54</strain>
    </source>
</reference>
<keyword id="KW-0028">Amino-acid biosynthesis</keyword>
<keyword id="KW-0479">Metal-binding</keyword>
<keyword id="KW-0486">Methionine biosynthesis</keyword>
<keyword id="KW-0489">Methyltransferase</keyword>
<keyword id="KW-0677">Repeat</keyword>
<keyword id="KW-0808">Transferase</keyword>
<keyword id="KW-0862">Zinc</keyword>
<dbReference type="EC" id="2.1.1.14" evidence="1"/>
<dbReference type="EMBL" id="CP001015">
    <property type="protein sequence ID" value="ACF55710.1"/>
    <property type="molecule type" value="Genomic_DNA"/>
</dbReference>
<dbReference type="SMR" id="B5E298"/>
<dbReference type="KEGG" id="spx:SPG_0534"/>
<dbReference type="HOGENOM" id="CLU_013175_0_0_9"/>
<dbReference type="UniPathway" id="UPA00051">
    <property type="reaction ID" value="UER00082"/>
</dbReference>
<dbReference type="GO" id="GO:0003871">
    <property type="term" value="F:5-methyltetrahydropteroyltriglutamate-homocysteine S-methyltransferase activity"/>
    <property type="evidence" value="ECO:0007669"/>
    <property type="project" value="UniProtKB-UniRule"/>
</dbReference>
<dbReference type="GO" id="GO:0008270">
    <property type="term" value="F:zinc ion binding"/>
    <property type="evidence" value="ECO:0007669"/>
    <property type="project" value="InterPro"/>
</dbReference>
<dbReference type="GO" id="GO:0009086">
    <property type="term" value="P:methionine biosynthetic process"/>
    <property type="evidence" value="ECO:0007669"/>
    <property type="project" value="UniProtKB-UniRule"/>
</dbReference>
<dbReference type="GO" id="GO:0032259">
    <property type="term" value="P:methylation"/>
    <property type="evidence" value="ECO:0007669"/>
    <property type="project" value="UniProtKB-KW"/>
</dbReference>
<dbReference type="CDD" id="cd03311">
    <property type="entry name" value="CIMS_C_terminal_like"/>
    <property type="match status" value="1"/>
</dbReference>
<dbReference type="CDD" id="cd03312">
    <property type="entry name" value="CIMS_N_terminal_like"/>
    <property type="match status" value="1"/>
</dbReference>
<dbReference type="Gene3D" id="3.20.20.210">
    <property type="match status" value="2"/>
</dbReference>
<dbReference type="HAMAP" id="MF_00172">
    <property type="entry name" value="Meth_synth"/>
    <property type="match status" value="1"/>
</dbReference>
<dbReference type="InterPro" id="IPR013215">
    <property type="entry name" value="Cbl-indep_Met_Synth_N"/>
</dbReference>
<dbReference type="InterPro" id="IPR006276">
    <property type="entry name" value="Cobalamin-indep_Met_synthase"/>
</dbReference>
<dbReference type="InterPro" id="IPR002629">
    <property type="entry name" value="Met_Synth_C/arc"/>
</dbReference>
<dbReference type="InterPro" id="IPR038071">
    <property type="entry name" value="UROD/MetE-like_sf"/>
</dbReference>
<dbReference type="NCBIfam" id="TIGR01371">
    <property type="entry name" value="met_syn_B12ind"/>
    <property type="match status" value="1"/>
</dbReference>
<dbReference type="NCBIfam" id="NF003556">
    <property type="entry name" value="PRK05222.1"/>
    <property type="match status" value="1"/>
</dbReference>
<dbReference type="PANTHER" id="PTHR30519">
    <property type="entry name" value="5-METHYLTETRAHYDROPTEROYLTRIGLUTAMATE--HOMOCYSTEINE METHYLTRANSFERASE"/>
    <property type="match status" value="1"/>
</dbReference>
<dbReference type="Pfam" id="PF08267">
    <property type="entry name" value="Meth_synt_1"/>
    <property type="match status" value="1"/>
</dbReference>
<dbReference type="Pfam" id="PF01717">
    <property type="entry name" value="Meth_synt_2"/>
    <property type="match status" value="1"/>
</dbReference>
<dbReference type="PIRSF" id="PIRSF000382">
    <property type="entry name" value="MeTrfase_B12_ind"/>
    <property type="match status" value="1"/>
</dbReference>
<dbReference type="SUPFAM" id="SSF51726">
    <property type="entry name" value="UROD/MetE-like"/>
    <property type="match status" value="2"/>
</dbReference>
<organism>
    <name type="scientific">Streptococcus pneumoniae serotype 19F (strain G54)</name>
    <dbReference type="NCBI Taxonomy" id="512566"/>
    <lineage>
        <taxon>Bacteria</taxon>
        <taxon>Bacillati</taxon>
        <taxon>Bacillota</taxon>
        <taxon>Bacilli</taxon>
        <taxon>Lactobacillales</taxon>
        <taxon>Streptococcaceae</taxon>
        <taxon>Streptococcus</taxon>
    </lineage>
</organism>
<feature type="chain" id="PRO_1000097847" description="5-methyltetrahydropteroyltriglutamate--homocysteine methyltransferase">
    <location>
        <begin position="1"/>
        <end position="749"/>
    </location>
</feature>
<feature type="active site" description="Proton donor" evidence="1">
    <location>
        <position position="689"/>
    </location>
</feature>
<feature type="binding site" evidence="1">
    <location>
        <begin position="15"/>
        <end position="18"/>
    </location>
    <ligand>
        <name>5-methyltetrahydropteroyltri-L-glutamate</name>
        <dbReference type="ChEBI" id="CHEBI:58207"/>
    </ligand>
</feature>
<feature type="binding site" evidence="1">
    <location>
        <position position="114"/>
    </location>
    <ligand>
        <name>5-methyltetrahydropteroyltri-L-glutamate</name>
        <dbReference type="ChEBI" id="CHEBI:58207"/>
    </ligand>
</feature>
<feature type="binding site" evidence="1">
    <location>
        <begin position="425"/>
        <end position="427"/>
    </location>
    <ligand>
        <name>L-homocysteine</name>
        <dbReference type="ChEBI" id="CHEBI:58199"/>
    </ligand>
</feature>
<feature type="binding site" evidence="1">
    <location>
        <begin position="425"/>
        <end position="427"/>
    </location>
    <ligand>
        <name>L-methionine</name>
        <dbReference type="ChEBI" id="CHEBI:57844"/>
    </ligand>
</feature>
<feature type="binding site" evidence="1">
    <location>
        <position position="478"/>
    </location>
    <ligand>
        <name>L-homocysteine</name>
        <dbReference type="ChEBI" id="CHEBI:58199"/>
    </ligand>
</feature>
<feature type="binding site" evidence="1">
    <location>
        <position position="478"/>
    </location>
    <ligand>
        <name>L-methionine</name>
        <dbReference type="ChEBI" id="CHEBI:57844"/>
    </ligand>
</feature>
<feature type="binding site" evidence="1">
    <location>
        <position position="555"/>
    </location>
    <ligand>
        <name>5-methyltetrahydropteroyltri-L-glutamate</name>
        <dbReference type="ChEBI" id="CHEBI:58207"/>
    </ligand>
</feature>
<feature type="binding site" evidence="1">
    <location>
        <position position="593"/>
    </location>
    <ligand>
        <name>L-homocysteine</name>
        <dbReference type="ChEBI" id="CHEBI:58199"/>
    </ligand>
</feature>
<feature type="binding site" evidence="1">
    <location>
        <position position="593"/>
    </location>
    <ligand>
        <name>L-methionine</name>
        <dbReference type="ChEBI" id="CHEBI:57844"/>
    </ligand>
</feature>
<feature type="binding site" evidence="1">
    <location>
        <position position="599"/>
    </location>
    <ligand>
        <name>5-methyltetrahydropteroyltri-L-glutamate</name>
        <dbReference type="ChEBI" id="CHEBI:58207"/>
    </ligand>
</feature>
<feature type="binding site" evidence="1">
    <location>
        <position position="636"/>
    </location>
    <ligand>
        <name>Zn(2+)</name>
        <dbReference type="ChEBI" id="CHEBI:29105"/>
        <note>catalytic</note>
    </ligand>
</feature>
<feature type="binding site" evidence="1">
    <location>
        <position position="638"/>
    </location>
    <ligand>
        <name>Zn(2+)</name>
        <dbReference type="ChEBI" id="CHEBI:29105"/>
        <note>catalytic</note>
    </ligand>
</feature>
<feature type="binding site" evidence="1">
    <location>
        <position position="660"/>
    </location>
    <ligand>
        <name>Zn(2+)</name>
        <dbReference type="ChEBI" id="CHEBI:29105"/>
        <note>catalytic</note>
    </ligand>
</feature>
<feature type="binding site" evidence="1">
    <location>
        <position position="721"/>
    </location>
    <ligand>
        <name>Zn(2+)</name>
        <dbReference type="ChEBI" id="CHEBI:29105"/>
        <note>catalytic</note>
    </ligand>
</feature>
<evidence type="ECO:0000255" key="1">
    <source>
        <dbReference type="HAMAP-Rule" id="MF_00172"/>
    </source>
</evidence>
<comment type="function">
    <text evidence="1">Catalyzes the transfer of a methyl group from 5-methyltetrahydrofolate to homocysteine resulting in methionine formation.</text>
</comment>
<comment type="catalytic activity">
    <reaction evidence="1">
        <text>5-methyltetrahydropteroyltri-L-glutamate + L-homocysteine = tetrahydropteroyltri-L-glutamate + L-methionine</text>
        <dbReference type="Rhea" id="RHEA:21196"/>
        <dbReference type="ChEBI" id="CHEBI:57844"/>
        <dbReference type="ChEBI" id="CHEBI:58140"/>
        <dbReference type="ChEBI" id="CHEBI:58199"/>
        <dbReference type="ChEBI" id="CHEBI:58207"/>
        <dbReference type="EC" id="2.1.1.14"/>
    </reaction>
</comment>
<comment type="cofactor">
    <cofactor evidence="1">
        <name>Zn(2+)</name>
        <dbReference type="ChEBI" id="CHEBI:29105"/>
    </cofactor>
    <text evidence="1">Binds 1 zinc ion per subunit.</text>
</comment>
<comment type="pathway">
    <text evidence="1">Amino-acid biosynthesis; L-methionine biosynthesis via de novo pathway; L-methionine from L-homocysteine (MetE route): step 1/1.</text>
</comment>
<comment type="similarity">
    <text evidence="1">Belongs to the vitamin-B12 independent methionine synthase family.</text>
</comment>
<gene>
    <name evidence="1" type="primary">metE</name>
    <name type="ordered locus">SPG_0534</name>
</gene>
<proteinExistence type="inferred from homology"/>